<comment type="function">
    <text evidence="1">Exoribonuclease involved in ribosome biosynthesis. Involved in the processing of ITS1, the internal transcribed spacer localized between the 18S and 5.8S rRNAs (By similarity).</text>
</comment>
<comment type="subcellular location">
    <subcellularLocation>
        <location evidence="1">Nucleus</location>
    </subcellularLocation>
</comment>
<comment type="similarity">
    <text evidence="3">Belongs to the REXO4 family.</text>
</comment>
<comment type="sequence caution" evidence="3">
    <conflict type="erroneous gene model prediction">
        <sequence resource="EMBL-CDS" id="AAW42722"/>
    </conflict>
</comment>
<gene>
    <name type="primary">REX4</name>
    <name type="ordered locus">CNC05710</name>
</gene>
<keyword id="KW-0269">Exonuclease</keyword>
<keyword id="KW-0378">Hydrolase</keyword>
<keyword id="KW-0540">Nuclease</keyword>
<keyword id="KW-0539">Nucleus</keyword>
<keyword id="KW-1185">Reference proteome</keyword>
<keyword id="KW-0698">rRNA processing</keyword>
<protein>
    <recommendedName>
        <fullName>RNA exonuclease 4</fullName>
        <ecNumber>3.1.-.-</ecNumber>
    </recommendedName>
</protein>
<evidence type="ECO:0000250" key="1"/>
<evidence type="ECO:0000256" key="2">
    <source>
        <dbReference type="SAM" id="MobiDB-lite"/>
    </source>
</evidence>
<evidence type="ECO:0000305" key="3"/>
<proteinExistence type="inferred from homology"/>
<feature type="chain" id="PRO_0000131694" description="RNA exonuclease 4">
    <location>
        <begin position="1"/>
        <end position="408"/>
    </location>
</feature>
<feature type="domain" description="Exonuclease">
    <location>
        <begin position="131"/>
        <end position="292"/>
    </location>
</feature>
<feature type="region of interest" description="Disordered" evidence="2">
    <location>
        <begin position="27"/>
        <end position="70"/>
    </location>
</feature>
<feature type="region of interest" description="Disordered" evidence="2">
    <location>
        <begin position="310"/>
        <end position="408"/>
    </location>
</feature>
<feature type="compositionally biased region" description="Low complexity" evidence="2">
    <location>
        <begin position="40"/>
        <end position="55"/>
    </location>
</feature>
<feature type="compositionally biased region" description="Basic and acidic residues" evidence="2">
    <location>
        <begin position="310"/>
        <end position="322"/>
    </location>
</feature>
<feature type="compositionally biased region" description="Gly residues" evidence="2">
    <location>
        <begin position="343"/>
        <end position="357"/>
    </location>
</feature>
<feature type="compositionally biased region" description="Basic and acidic residues" evidence="2">
    <location>
        <begin position="372"/>
        <end position="384"/>
    </location>
</feature>
<organism>
    <name type="scientific">Cryptococcus neoformans var. neoformans serotype D (strain JEC21 / ATCC MYA-565)</name>
    <name type="common">Filobasidiella neoformans</name>
    <dbReference type="NCBI Taxonomy" id="214684"/>
    <lineage>
        <taxon>Eukaryota</taxon>
        <taxon>Fungi</taxon>
        <taxon>Dikarya</taxon>
        <taxon>Basidiomycota</taxon>
        <taxon>Agaricomycotina</taxon>
        <taxon>Tremellomycetes</taxon>
        <taxon>Tremellales</taxon>
        <taxon>Cryptococcaceae</taxon>
        <taxon>Cryptococcus</taxon>
        <taxon>Cryptococcus neoformans species complex</taxon>
    </lineage>
</organism>
<sequence length="408" mass="44977">MDKKKAPGQTVASSNWLQLQSTLSTITKEKDVSNSKAHNSRSSQSPSSSLRSSSRIQRKSKHSQGVGQYMGRVEVASTAKTTVSQLRKGKVISNEPCILLEAFSDSPLLHELRHMVLGNHLLSESQKEPGQYLAIDCEMVGVGPNGMENTLARVSIVNYHGAVILDTFVQPREPVTDYRTWISGVKQSDLLGAPQFDEVNKQVANLLHDKILIGHAIDNDLKVLMLTHPGPLTRDTQKYKPLQEIAKNKRPGLKKLSELLLGVQIQTGAHSSVVDARVAMALYRLHKKEWERSVWRQTEAYRSISSVNKPEHVLGKRGHDEKEAEDGEETAGESKRKNRKKSGNGGGRQQFPGGGRKGISSGLDVIVRRNGQRVDENGRGDGTSRRKAGRGEISTFTGGESWWEQPAA</sequence>
<name>REXO4_CRYNJ</name>
<accession>P0CQ44</accession>
<accession>Q55WJ1</accession>
<accession>Q5KJQ4</accession>
<dbReference type="EC" id="3.1.-.-"/>
<dbReference type="EMBL" id="AE017343">
    <property type="protein sequence ID" value="AAW42722.1"/>
    <property type="status" value="ALT_SEQ"/>
    <property type="molecule type" value="Genomic_DNA"/>
</dbReference>
<dbReference type="RefSeq" id="XP_570029.1">
    <property type="nucleotide sequence ID" value="XM_570029.1"/>
</dbReference>
<dbReference type="SMR" id="P0CQ44"/>
<dbReference type="STRING" id="214684.P0CQ44"/>
<dbReference type="PaxDb" id="214684-P0CQ44"/>
<dbReference type="eggNOG" id="KOG2249">
    <property type="taxonomic scope" value="Eukaryota"/>
</dbReference>
<dbReference type="InParanoid" id="P0CQ44"/>
<dbReference type="Proteomes" id="UP000002149">
    <property type="component" value="Chromosome 3"/>
</dbReference>
<dbReference type="GO" id="GO:0005634">
    <property type="term" value="C:nucleus"/>
    <property type="evidence" value="ECO:0000318"/>
    <property type="project" value="GO_Central"/>
</dbReference>
<dbReference type="GO" id="GO:0008408">
    <property type="term" value="F:3'-5' exonuclease activity"/>
    <property type="evidence" value="ECO:0007669"/>
    <property type="project" value="InterPro"/>
</dbReference>
<dbReference type="GO" id="GO:0004527">
    <property type="term" value="F:exonuclease activity"/>
    <property type="evidence" value="ECO:0000318"/>
    <property type="project" value="GO_Central"/>
</dbReference>
<dbReference type="GO" id="GO:0003676">
    <property type="term" value="F:nucleic acid binding"/>
    <property type="evidence" value="ECO:0007669"/>
    <property type="project" value="InterPro"/>
</dbReference>
<dbReference type="GO" id="GO:0006396">
    <property type="term" value="P:RNA processing"/>
    <property type="evidence" value="ECO:0000318"/>
    <property type="project" value="GO_Central"/>
</dbReference>
<dbReference type="GO" id="GO:0006364">
    <property type="term" value="P:rRNA processing"/>
    <property type="evidence" value="ECO:0007669"/>
    <property type="project" value="UniProtKB-KW"/>
</dbReference>
<dbReference type="CDD" id="cd06144">
    <property type="entry name" value="REX4_like"/>
    <property type="match status" value="1"/>
</dbReference>
<dbReference type="FunFam" id="3.30.420.10:FF:000007">
    <property type="entry name" value="Interferon-stimulated exonuclease gene 20"/>
    <property type="match status" value="1"/>
</dbReference>
<dbReference type="Gene3D" id="3.30.420.10">
    <property type="entry name" value="Ribonuclease H-like superfamily/Ribonuclease H"/>
    <property type="match status" value="1"/>
</dbReference>
<dbReference type="InterPro" id="IPR013520">
    <property type="entry name" value="Exonuclease_RNaseT/DNA_pol3"/>
</dbReference>
<dbReference type="InterPro" id="IPR037431">
    <property type="entry name" value="REX4_DEDDh_dom"/>
</dbReference>
<dbReference type="InterPro" id="IPR047021">
    <property type="entry name" value="REXO1/3/4-like"/>
</dbReference>
<dbReference type="InterPro" id="IPR012337">
    <property type="entry name" value="RNaseH-like_sf"/>
</dbReference>
<dbReference type="InterPro" id="IPR036397">
    <property type="entry name" value="RNaseH_sf"/>
</dbReference>
<dbReference type="PANTHER" id="PTHR12801:SF45">
    <property type="entry name" value="RNA EXONUCLEASE 4"/>
    <property type="match status" value="1"/>
</dbReference>
<dbReference type="PANTHER" id="PTHR12801">
    <property type="entry name" value="RNA EXONUCLEASE REXO1 / RECO3 FAMILY MEMBER-RELATED"/>
    <property type="match status" value="1"/>
</dbReference>
<dbReference type="Pfam" id="PF00929">
    <property type="entry name" value="RNase_T"/>
    <property type="match status" value="1"/>
</dbReference>
<dbReference type="SMART" id="SM00479">
    <property type="entry name" value="EXOIII"/>
    <property type="match status" value="1"/>
</dbReference>
<dbReference type="SUPFAM" id="SSF53098">
    <property type="entry name" value="Ribonuclease H-like"/>
    <property type="match status" value="1"/>
</dbReference>
<reference key="1">
    <citation type="journal article" date="2005" name="Science">
        <title>The genome of the basidiomycetous yeast and human pathogen Cryptococcus neoformans.</title>
        <authorList>
            <person name="Loftus B.J."/>
            <person name="Fung E."/>
            <person name="Roncaglia P."/>
            <person name="Rowley D."/>
            <person name="Amedeo P."/>
            <person name="Bruno D."/>
            <person name="Vamathevan J."/>
            <person name="Miranda M."/>
            <person name="Anderson I.J."/>
            <person name="Fraser J.A."/>
            <person name="Allen J.E."/>
            <person name="Bosdet I.E."/>
            <person name="Brent M.R."/>
            <person name="Chiu R."/>
            <person name="Doering T.L."/>
            <person name="Donlin M.J."/>
            <person name="D'Souza C.A."/>
            <person name="Fox D.S."/>
            <person name="Grinberg V."/>
            <person name="Fu J."/>
            <person name="Fukushima M."/>
            <person name="Haas B.J."/>
            <person name="Huang J.C."/>
            <person name="Janbon G."/>
            <person name="Jones S.J.M."/>
            <person name="Koo H.L."/>
            <person name="Krzywinski M.I."/>
            <person name="Kwon-Chung K.J."/>
            <person name="Lengeler K.B."/>
            <person name="Maiti R."/>
            <person name="Marra M.A."/>
            <person name="Marra R.E."/>
            <person name="Mathewson C.A."/>
            <person name="Mitchell T.G."/>
            <person name="Pertea M."/>
            <person name="Riggs F.R."/>
            <person name="Salzberg S.L."/>
            <person name="Schein J.E."/>
            <person name="Shvartsbeyn A."/>
            <person name="Shin H."/>
            <person name="Shumway M."/>
            <person name="Specht C.A."/>
            <person name="Suh B.B."/>
            <person name="Tenney A."/>
            <person name="Utterback T.R."/>
            <person name="Wickes B.L."/>
            <person name="Wortman J.R."/>
            <person name="Wye N.H."/>
            <person name="Kronstad J.W."/>
            <person name="Lodge J.K."/>
            <person name="Heitman J."/>
            <person name="Davis R.W."/>
            <person name="Fraser C.M."/>
            <person name="Hyman R.W."/>
        </authorList>
    </citation>
    <scope>NUCLEOTIDE SEQUENCE [LARGE SCALE GENOMIC DNA]</scope>
    <source>
        <strain>JEC21 / ATCC MYA-565</strain>
    </source>
</reference>